<organism>
    <name type="scientific">Bos taurus</name>
    <name type="common">Bovine</name>
    <dbReference type="NCBI Taxonomy" id="9913"/>
    <lineage>
        <taxon>Eukaryota</taxon>
        <taxon>Metazoa</taxon>
        <taxon>Chordata</taxon>
        <taxon>Craniata</taxon>
        <taxon>Vertebrata</taxon>
        <taxon>Euteleostomi</taxon>
        <taxon>Mammalia</taxon>
        <taxon>Eutheria</taxon>
        <taxon>Laurasiatheria</taxon>
        <taxon>Artiodactyla</taxon>
        <taxon>Ruminantia</taxon>
        <taxon>Pecora</taxon>
        <taxon>Bovidae</taxon>
        <taxon>Bovinae</taxon>
        <taxon>Bos</taxon>
    </lineage>
</organism>
<evidence type="ECO:0000250" key="1">
    <source>
        <dbReference type="UniProtKB" id="P31749"/>
    </source>
</evidence>
<evidence type="ECO:0000250" key="2">
    <source>
        <dbReference type="UniProtKB" id="P31750"/>
    </source>
</evidence>
<evidence type="ECO:0000250" key="3">
    <source>
        <dbReference type="UniProtKB" id="P31751"/>
    </source>
</evidence>
<evidence type="ECO:0000250" key="4">
    <source>
        <dbReference type="UniProtKB" id="P47196"/>
    </source>
</evidence>
<evidence type="ECO:0000255" key="5">
    <source>
        <dbReference type="PROSITE-ProRule" id="PRU00145"/>
    </source>
</evidence>
<evidence type="ECO:0000255" key="6">
    <source>
        <dbReference type="PROSITE-ProRule" id="PRU00159"/>
    </source>
</evidence>
<evidence type="ECO:0000255" key="7">
    <source>
        <dbReference type="PROSITE-ProRule" id="PRU00618"/>
    </source>
</evidence>
<evidence type="ECO:0000255" key="8">
    <source>
        <dbReference type="PROSITE-ProRule" id="PRU10027"/>
    </source>
</evidence>
<evidence type="ECO:0000256" key="9">
    <source>
        <dbReference type="SAM" id="MobiDB-lite"/>
    </source>
</evidence>
<evidence type="ECO:0000269" key="10">
    <source>
    </source>
</evidence>
<evidence type="ECO:0000305" key="11"/>
<comment type="function">
    <text evidence="1 2 4">AKT1 is one of 3 closely related serine/threonine-protein kinases (AKT1, AKT2 and AKT3) called the AKT kinase, and which regulate many processes including metabolism, proliferation, cell survival, growth and angiogenesis. This is mediated through serine and/or threonine phosphorylation of a range of downstream substrates. Over 100 substrate candidates have been reported so far, but for most of them, no isoform specificity has been reported (By similarity). AKT is responsible of the regulation of glucose uptake by mediating insulin-induced translocation of the SLC2A4/GLUT4 glucose transporter to the cell surface. Phosphorylation of PTPN1 at 'Ser-50' negatively modulates its phosphatase activity preventing dephosphorylation of the insulin receptor and the attenuation of insulin signaling (By similarity). Phosphorylation of TBC1D4 triggers the binding of this effector to inhibitory 14-3-3 proteins, which is required for insulin-stimulated glucose transport (By similarity). AKT also regulates the storage of glucose in the form of glycogen by phosphorylating GSK3A at 'Ser-21' and GSK3B at 'Ser-9', resulting in inhibition of its kinase activity. Phosphorylation of GSK3 isoforms by AKT is also thought to be one mechanism by which cell proliferation is driven (By similarity). AKT also regulates cell survival via the phosphorylation of MAP3K5 (apoptosis signal-related kinase). Phosphorylation of 'Ser-83' decreases MAP3K5 kinase activity stimulated by oxidative stress and thereby prevents apoptosis. AKT mediates insulin-stimulated protein synthesis by phosphorylating TSC2 at 'Ser-939' and 'Thr-1462', thereby activating the mTORC1 signaling pathway, and leading to both phosphorylation of 4E-BP1 and in activation of RPS6KB1. Also regulates the mTORC1 signaling pathway by catalyzing phosphorylation of CASTOR1 and DEPDC5. AKT plays a role as key modulator of the AKT-mTOR signaling pathway controlling the tempo of the process of newborn neurons integration during adult neurogenesis, including correct neuron positioning, dendritic development and synapse formation (By similarity). Part of a positive feedback loop of mTORC2 signaling by mediating phosphorylation of MAPKAP1/SIN1, promoting mTORC2 activation (By similarity). AKT is involved in the phosphorylation of members of the FOXO factors (Forkhead family of transcription factors), leading to binding of 14-3-3 proteins and cytoplasmic localization. In particular, FOXO1 is phosphorylated at 'Thr-24', 'Ser-256' and 'Ser-319'. FOXO3 and FOXO4 are phosphorylated on equivalent sites. AKT has an important role in the regulation of NF-kappa-B-dependent gene transcription and positively regulates the activity of CREB1 (cyclic AMP (cAMP)-response element binding protein). The phosphorylation of CREB1 induces the binding of accessory proteins that are necessary for the transcription of pro-survival genes such as BCL2 and MCL1 (By similarity). AKT phosphorylates 'Ser-454' on ATP citrate lyase (ACLY), thereby potentially regulating ACLY activity and fatty acid synthesis (By similarity). Activates the 3B isoform of cyclic nucleotide phosphodiesterase (PDE3B) via phosphorylation of 'Ser-273', resulting in reduced cyclic AMP levels and inhibition of lipolysis (By similarity). Phosphorylates PIKFYVE on 'Ser-318', which results in increased PI(3)P-5 activity (By similarity). The Rho GTPase-activating protein DLC1 is another substrate and its phosphorylation is implicated in the regulation cell proliferation and cell growth (By similarity). Signals downstream of phosphatidylinositol 3-kinase (PI(3)K) to mediate the effects of various growth factors such as platelet-derived growth factor (PDGF), epidermal growth factor (EGF), insulin and insulin-like growth factor 1 (IGF1) (By similarity). AKT mediates the antiapoptotic effects of IGF1 (By similarity). Essential for the SPATA13-mediated regulation of cell migration and adhesion assembly and disassembly (By similarity). May be involved in the regulation of the placental development (By similarity). Phosphorylates STK4/MST1 at 'Thr-120' and 'Thr-387' leading to inhibition of its: kinase activity, nuclear translocation, autophosphorylation and ability to phosphorylate FOXO3. Phosphorylates STK3/MST2 at 'Thr-117' and 'Thr-384' leading to inhibition of its: cleavage, kinase activity, autophosphorylation at Thr-180, binding to RASSF1 and nuclear translocation. Phosphorylates SRPK2 and enhances its kinase activity towards SRSF2 and ACIN1 and promotes its nuclear translocation. Phosphorylates RAF1 at 'Ser-259' and negatively regulates its activity. Phosphorylation of BAD stimulates its pro-apoptotic activity. Phosphorylates KAT6A at 'Thr-369' and this phosphorylation inhibits the interaction of KAT6A with PML and negatively regulates its acetylation activity towards p53/TP53. Phosphorylates palladin (PALLD), modulating cytoskeletal organization and cell motility. Phosphorylates prohibitin (PHB), playing an important role in cell metabolism and proliferation. Phosphorylates CDKN1A, for which phosphorylation at 'Thr-145' induces its release from CDK2 and cytoplasmic relocalization. These recent findings indicate that the AKT1 isoform has a more specific role in cell motility and proliferation. Phosphorylates CLK2 thereby controlling cell survival to ionizing radiation (By similarity). Phosphorylates PCK1 at 'Ser-90', reducing the binding affinity of PCK1 to oxaloacetate and changing PCK1 into an atypical protein kinase activity using GTP as donor (By similarity). Also acts as an activator of TMEM175 potassium channel activity in response to growth factors: forms the lysoK(GF) complex together with TMEM175 and acts by promoting TMEM175 channel activation, independently of its protein kinase activity (By similarity). Acts as a negative regulator of the cGAS-STING pathway by mediating phosphorylation of CGAS during mitosis, leading to its inhibition (By similarity). Acts as a regulator of mitochondrial calcium uptake by mediating phosphorylation of MICU1 in the mitochondrial intermembrane space, impairing MICU1 maturation (By similarity). Acts as an inhibitor of tRNA methylation by mediating phosphorylation of the N-terminus of METTL1, thereby inhibiting METTL1 methyltransferase activity (By similarity). In response to LPAR1 receptor pathway activation, phosphorylates Rabin8/RAB3IP which alters its activity and phosphorylates WDR44 which induces WDR44 binding to Rab11, thereby switching Rab11 vesicular function from preciliary trafficking to endocytic recycling (By similarity).</text>
</comment>
<comment type="catalytic activity">
    <reaction>
        <text>L-seryl-[protein] + ATP = O-phospho-L-seryl-[protein] + ADP + H(+)</text>
        <dbReference type="Rhea" id="RHEA:17989"/>
        <dbReference type="Rhea" id="RHEA-COMP:9863"/>
        <dbReference type="Rhea" id="RHEA-COMP:11604"/>
        <dbReference type="ChEBI" id="CHEBI:15378"/>
        <dbReference type="ChEBI" id="CHEBI:29999"/>
        <dbReference type="ChEBI" id="CHEBI:30616"/>
        <dbReference type="ChEBI" id="CHEBI:83421"/>
        <dbReference type="ChEBI" id="CHEBI:456216"/>
        <dbReference type="EC" id="2.7.11.1"/>
    </reaction>
</comment>
<comment type="catalytic activity">
    <reaction>
        <text>L-threonyl-[protein] + ATP = O-phospho-L-threonyl-[protein] + ADP + H(+)</text>
        <dbReference type="Rhea" id="RHEA:46608"/>
        <dbReference type="Rhea" id="RHEA-COMP:11060"/>
        <dbReference type="Rhea" id="RHEA-COMP:11605"/>
        <dbReference type="ChEBI" id="CHEBI:15378"/>
        <dbReference type="ChEBI" id="CHEBI:30013"/>
        <dbReference type="ChEBI" id="CHEBI:30616"/>
        <dbReference type="ChEBI" id="CHEBI:61977"/>
        <dbReference type="ChEBI" id="CHEBI:456216"/>
        <dbReference type="EC" id="2.7.11.1"/>
    </reaction>
</comment>
<comment type="subunit">
    <text evidence="1 2 4">Interacts (via the C-terminus) with CCDC88A (via its C-terminus) and THEM4 (via its C-terminus). Interacts with AKTIP. Interacts (via PH domain) with MTCP1, TCL1A and TCL1B. Interacts with TRAF6. Interacts with GRB10; the interaction leads to GRB10 phosphorylation thus promoting YWHAE binding. Interacts with RARA; the interaction phosphorylates RARA and represses its transactivation activity. Interacts with MAP3K5 and TNK2. Interacts with BAD, CLK2, PPP2R5B, STK3 and STK4. Interacts (via PH domain) with SIRT1. Interacts with SRPK2 in a phosphorylation-dependent manner. Interacts with RAF1. Interacts with PKN2 (via C-terminal domain); the interaction occurs with the C-terminus cleavage products of PKN2 in apoptotic cells. Interacts with TRIM13; the interaction ubiquitinates AKT1 leading to its proteasomal degradation. Interacts with and phosphorylated by PDPK1. Interacts with BTBD10. Interacts with KCTD20. Interacts with PA2G4. Interacts with PA2G4. Interacts with KIF14; the interaction is detected in the plasma membrane upon INS stimulation and promotes AKT1 phosphorylation. Interacts with FAM83B; activates the PI3K/AKT signaling cascade. Interacts with WDFY2 (via WD repeats 1-3). Forms a complex with WDFY2 and FOXO1. Interacts with FAM168A (By similarity). Interacts with SYAP1 (via phosphorylated form and BSD domain); this interaction is enhanced in a mTORC2-mediated manner in response to epidermal growth factor (EGF) stimulation and activates AKT1 (By similarity). Interacts with PKHM3 (By similarity). Interacts with FKBP5/FKBP51; promoting interaction between Akt/AKT1 and PHLPP1, thereby enhancing dephosphorylation and subsequent activation of Akt/AKT1 (By similarity). Interacts with TMEM175; leading to formation of the lysoK(GF) complex (By similarity).</text>
</comment>
<comment type="interaction">
    <interactant intactId="EBI-368344">
        <id>Q01314</id>
    </interactant>
    <interactant intactId="EBI-368293">
        <id>Q9R269</id>
        <label>Ppl</label>
    </interactant>
    <organismsDiffer>true</organismsDiffer>
    <experiments>2</experiments>
</comment>
<comment type="subcellular location">
    <subcellularLocation>
        <location evidence="2">Cytoplasm</location>
    </subcellularLocation>
    <subcellularLocation>
        <location evidence="1">Nucleus</location>
    </subcellularLocation>
    <subcellularLocation>
        <location evidence="1">Cell membrane</location>
    </subcellularLocation>
    <subcellularLocation>
        <location evidence="2">Mitochondrion intermembrane space</location>
    </subcellularLocation>
    <text evidence="1 2">Nucleus after activation by integrin-linked protein kinase 1 (ILK1). Nuclear translocation is enhanced by interaction with TCL1A. Phosphorylation on Tyr-176 by TNK2 results in its localization to the cell membrane where it is targeted for further phosphorylations on Thr-308 and Ser-473 leading to its activation and the activated form translocates to the nucleus. Colocalizes with WDFY2 in intracellular vesicles (By similarity). Also localizes to mitochondrial intermembrane space in response to rapamycin treatment (By similarity).</text>
</comment>
<comment type="domain">
    <text evidence="1 4">Binding of the PH domain to phosphatidylinositol 3,4,5-trisphosphate (PI(3,4,5)P3) following phosphatidylinositol 3-kinase alpha (PIK3CA) activity results in its targeting to the plasma membrane (By similarity). PI(3,4,5)P3 is also required for phosphorylation at Thr-308 and subsequent activation (By similarity). The PH domain mediates interaction with TNK2 and Tyr-176 is also essential for this interaction (By similarity).</text>
</comment>
<comment type="domain">
    <text evidence="1">The AGC-kinase C-terminal mediates interaction with THEM4.</text>
</comment>
<comment type="PTM">
    <text evidence="1">O-GlcNAcylation at Thr-305 and Thr-312 inhibits activating phosphorylation at Thr-308 via disrupting the interaction between AKT1 and PDPK1. O-GlcNAcylation at Ser-473 also probably interferes with phosphorylation at this site (By similarity).</text>
</comment>
<comment type="PTM">
    <text evidence="1 2 10">Phosphorylation on Thr-308, Ser-473 and Tyr-474 is required for full activity (By similarity). Phosphorylation of the activation loop at Thr-308 by PDPK1/PDK1 is a prerequisite for full activation (By similarity). Phosphorylation by mTORC2 in response to growth factors plays a key role in AKT1 activation: mTORC2 phosphorylates different sites depending on the context, such as Thr-450, Ser-473, Ser-477 or Thr-479, thereby facilitating subsequent phosphorylation of the activation loop by PDPK1/PDK1 (By similarity). Phosphorylation at Ser-473 by mTORC2 promotes ubiquitination and degradation by the proteasome (By similarity). Also phosphorylated at Ser-477 and Thr-479 by CDK2, facilitating subsequent phosphorylation of the activation loop by PDPK1/PDK1 (By similarity). Activated TNK2 phosphorylates it on Tyr-176 resulting in its binding to the anionic plasma membrane phospholipid PA (By similarity). This phosphorylated form localizes to the cell membrane, where it is targeted by PDPK1 and PDPK2 for further phosphorylations on Thr-308 and Ser-473 leading to its activation (By similarity). Phosphorylated at Thr-308 and Ser-473 by IKBKE and TBK1 (By similarity). Ser-473 phosphorylation is enhanced by interaction with AGAP2 isoform 2 (PIKE-A) (By similarity). Ser-473 phosphorylation is enhanced by signaling through activated FLT3 (By similarity). Ser-473 is dephosphorylated by PHLPP (PubMed:15808505). Dephosphorylated at Thr-308 and Ser-473 by PP2A phosphatase (By similarity). The phosphorylated form of PPP2R5B is required for bridging AKT1 with PP2A phosphatase (By similarity). Ser-473 is dephosphorylated by CPPED1, leading to termination of signaling (By similarity). AIM2 acts as an inhibitor of AKT1 by inhibiting phosphorylation Ser-473: AIM2 acts both by inhibiting the activity of PRKDC/DNA-PK kinase and promoting dephosphorylation by PP2A phosphatase (By similarity).</text>
</comment>
<comment type="PTM">
    <text evidence="1 2">Ubiquitinated; undergoes both 'Lys-48'- and 'Lys-63'-linked polyubiquitination. TRAF6-induced 'Lys-63'-linked AKT1 ubiquitination is critical for phosphorylation and activation. When ubiquitinated, it translocates to the plasma membrane, where it becomes phosphorylated. When fully phosphorylated and translocated into the nucleus, undergoes 'Lys-48'-polyubiquitination catalyzed by TTC3, leading to its degradation by the proteasome. Ubiquitinated via 'Lys-48'-linked polyubiquitination by ZNRF1, leading to its degradation by the proteasome. Also ubiquitinated by TRIM13 leading to its proteasomal degradation. Phosphorylated, undergoes 'Lys-48'-linked polyubiquitination preferentially at Lys-284 catalyzed by MUL1, leading to its proteasomal degradation (By similarity).</text>
</comment>
<comment type="PTM">
    <text evidence="1">Acetylated on Lys-14 and Lys-20 by the histone acetyltransferases EP300 and KAT2B. Acetylation results in reduced phosphorylation and inhibition of activity. Deacetylated at Lys-14 and Lys-20 by SIRT1. SIRT1-mediated deacetylation relieves the inhibition (By similarity).</text>
</comment>
<comment type="PTM">
    <text evidence="1 2">Cleavage by caspase-3/CASP3 (By similarity). Cleaved at the caspase-3 consensus site Asp-462 during apoptosis, resulting in down-regulation of the AKT signaling pathway and decreased cell survival (By similarity).</text>
</comment>
<comment type="similarity">
    <text evidence="11">Belongs to the protein kinase superfamily. AGC Ser/Thr protein kinase family. RAC subfamily.</text>
</comment>
<comment type="caution">
    <text evidence="11">In light of strong homologies in the primary amino acid sequence, the 3 AKT kinases were long surmised to play redundant and overlapping roles. More recent studies has brought into question the redundancy within AKT kinase isoforms and instead pointed to isoform specific functions in different cellular events and diseases. AKT1 is more specifically involved in cellular survival pathways, by inhibiting apoptotic processes; whereas AKT2 is more specific for the insulin receptor signaling pathway. Moreover, while AKT1 and AKT2 are often implicated in many aspects of cellular transformation, the 2 isoforms act in a complementary opposing manner. The role of AKT3 is less clear, though it appears to be predominantly expressed in brain.</text>
</comment>
<gene>
    <name type="primary">AKT1</name>
    <name type="synonym">PKB</name>
</gene>
<accession>Q01314</accession>
<accession>Q5ER96</accession>
<protein>
    <recommendedName>
        <fullName>RAC-alpha serine/threonine-protein kinase</fullName>
        <ecNumber>2.7.11.1</ecNumber>
    </recommendedName>
    <alternativeName>
        <fullName>Protein kinase B</fullName>
        <shortName>PKB</shortName>
    </alternativeName>
    <alternativeName>
        <fullName>Protein kinase B alpha</fullName>
        <shortName>PKB alpha</shortName>
    </alternativeName>
    <alternativeName>
        <fullName>RAC-PK-alpha</fullName>
    </alternativeName>
</protein>
<reference key="1">
    <citation type="journal article" date="1991" name="Eur. J. Biochem.">
        <title>Molecular cloning and characterisation of a novel putative protein-serine kinase related to the cAMP-dependent and protein kinase C families.</title>
        <authorList>
            <person name="Coffer P.J."/>
            <person name="Woodgett J.R."/>
        </authorList>
    </citation>
    <scope>NUCLEOTIDE SEQUENCE [MRNA]</scope>
    <source>
        <tissue>Brain</tissue>
    </source>
</reference>
<reference key="2">
    <citation type="journal article" date="1992" name="Eur. J. Biochem.">
        <authorList>
            <person name="Coffer P.J."/>
            <person name="Woodgett J.R."/>
        </authorList>
    </citation>
    <scope>ERRATUM OF PUBMED:1718748</scope>
    <scope>SEQUENCE REVISION</scope>
</reference>
<reference key="3">
    <citation type="submission" date="2004-10" db="EMBL/GenBank/DDBJ databases">
        <title>Complete sequence of the bovine AKT1 gene.</title>
        <authorList>
            <person name="Khatib H."/>
        </authorList>
    </citation>
    <scope>NUCLEOTIDE SEQUENCE [MRNA]</scope>
    <source>
        <tissue>Brain</tissue>
    </source>
</reference>
<reference key="4">
    <citation type="journal article" date="2005" name="Mol. Cell">
        <title>PHLPP: a phosphatase that directly dephosphorylates Akt, promotes apoptosis, and suppresses tumor growth.</title>
        <authorList>
            <person name="Gao T."/>
            <person name="Furnari F."/>
            <person name="Newton A.C."/>
        </authorList>
    </citation>
    <scope>DEPHOSPHORYLATION AT SER-473 BY PHLPP</scope>
</reference>
<sequence>MNDVAIVKEGWLHKRGEYIKTWRPRYFLLKNDGTFIGYKERPQDLEQRESPLNNFSVAQCQLMKTERPRPNTFIIRCLQWTTVIERTFHVETPEEREEWTTAIQTVADGLKRQEEETMDFRSGSPGENSGAEEMEVSLAKPKHRVTMNDFEYLKLLGKGTFGKVILVKEKATGRYYAMKILKKEVIVAKDEVAHTLTENRVLQNSRHPFLTALKYSFQTHDRLCFVMEYANGGELFFHLSRERVFSEDRARFYGAEIVSALDYLHSEKEVVYRDLKLENLMLDKDGHIKITDFGLCKEGIKDGATMKTFCGTPEYLAPEVLEDNDYGRAVDWWGLGVVMYEMMCGRLPFYNQDHEKLFELILMEEIRFPRTLSPEAKSLLSGLLKKDPKQRLGGGSEDAKEIMQHRFFASIVWQDVYEKKLSPPFKPQVTSETDTRYFDEEFTAQMITITPPDQDDSMEGVDSERRPHFPQFSYSASATA</sequence>
<keyword id="KW-0007">Acetylation</keyword>
<keyword id="KW-0053">Apoptosis</keyword>
<keyword id="KW-0067">ATP-binding</keyword>
<keyword id="KW-0119">Carbohydrate metabolism</keyword>
<keyword id="KW-1003">Cell membrane</keyword>
<keyword id="KW-0963">Cytoplasm</keyword>
<keyword id="KW-0217">Developmental protein</keyword>
<keyword id="KW-1015">Disulfide bond</keyword>
<keyword id="KW-0313">Glucose metabolism</keyword>
<keyword id="KW-0320">Glycogen biosynthesis</keyword>
<keyword id="KW-0321">Glycogen metabolism</keyword>
<keyword id="KW-0325">Glycoprotein</keyword>
<keyword id="KW-1017">Isopeptide bond</keyword>
<keyword id="KW-0418">Kinase</keyword>
<keyword id="KW-0472">Membrane</keyword>
<keyword id="KW-0496">Mitochondrion</keyword>
<keyword id="KW-0524">Neurogenesis</keyword>
<keyword id="KW-0547">Nucleotide-binding</keyword>
<keyword id="KW-0539">Nucleus</keyword>
<keyword id="KW-0597">Phosphoprotein</keyword>
<keyword id="KW-1185">Reference proteome</keyword>
<keyword id="KW-0723">Serine/threonine-protein kinase</keyword>
<keyword id="KW-0762">Sugar transport</keyword>
<keyword id="KW-0808">Transferase</keyword>
<keyword id="KW-0810">Translation regulation</keyword>
<keyword id="KW-0813">Transport</keyword>
<keyword id="KW-0832">Ubl conjugation</keyword>
<name>AKT1_BOVIN</name>
<feature type="chain" id="PRO_0000085604" description="RAC-alpha serine/threonine-protein kinase">
    <location>
        <begin position="1"/>
        <end position="480"/>
    </location>
</feature>
<feature type="domain" description="PH" evidence="5">
    <location>
        <begin position="5"/>
        <end position="108"/>
    </location>
</feature>
<feature type="domain" description="Protein kinase" evidence="6">
    <location>
        <begin position="150"/>
        <end position="408"/>
    </location>
</feature>
<feature type="domain" description="AGC-kinase C-terminal" evidence="7">
    <location>
        <begin position="409"/>
        <end position="480"/>
    </location>
</feature>
<feature type="region of interest" description="Disordered" evidence="9">
    <location>
        <begin position="450"/>
        <end position="480"/>
    </location>
</feature>
<feature type="active site" description="Proton acceptor" evidence="6 8">
    <location>
        <position position="274"/>
    </location>
</feature>
<feature type="binding site" evidence="1">
    <location>
        <begin position="14"/>
        <end position="19"/>
    </location>
    <ligand>
        <name>1D-myo-inositol 1,3,4,5-tetrakisphosphate</name>
        <dbReference type="ChEBI" id="CHEBI:57895"/>
    </ligand>
</feature>
<feature type="binding site" evidence="1">
    <location>
        <begin position="23"/>
        <end position="25"/>
    </location>
    <ligand>
        <name>1D-myo-inositol 1,3,4,5-tetrakisphosphate</name>
        <dbReference type="ChEBI" id="CHEBI:57895"/>
    </ligand>
</feature>
<feature type="binding site" evidence="1">
    <location>
        <position position="53"/>
    </location>
    <ligand>
        <name>1D-myo-inositol 1,3,4,5-tetrakisphosphate</name>
        <dbReference type="ChEBI" id="CHEBI:57895"/>
    </ligand>
</feature>
<feature type="binding site" evidence="1">
    <location>
        <position position="86"/>
    </location>
    <ligand>
        <name>1D-myo-inositol 1,3,4,5-tetrakisphosphate</name>
        <dbReference type="ChEBI" id="CHEBI:57895"/>
    </ligand>
</feature>
<feature type="binding site" evidence="6">
    <location>
        <begin position="156"/>
        <end position="164"/>
    </location>
    <ligand>
        <name>ATP</name>
        <dbReference type="ChEBI" id="CHEBI:30616"/>
    </ligand>
</feature>
<feature type="binding site" evidence="6">
    <location>
        <position position="179"/>
    </location>
    <ligand>
        <name>ATP</name>
        <dbReference type="ChEBI" id="CHEBI:30616"/>
    </ligand>
</feature>
<feature type="site" description="Cleavage; by caspase-3" evidence="2">
    <location>
        <position position="462"/>
    </location>
</feature>
<feature type="modified residue" description="N6-acetyllysine" evidence="1">
    <location>
        <position position="14"/>
    </location>
</feature>
<feature type="modified residue" description="N6-acetyllysine" evidence="1">
    <location>
        <position position="20"/>
    </location>
</feature>
<feature type="modified residue" description="Phosphoserine" evidence="1">
    <location>
        <position position="124"/>
    </location>
</feature>
<feature type="modified residue" description="Phosphoserine; alternate" evidence="1">
    <location>
        <position position="129"/>
    </location>
</feature>
<feature type="modified residue" description="Phosphotyrosine; by TNK2" evidence="1">
    <location>
        <position position="176"/>
    </location>
</feature>
<feature type="modified residue" description="Phosphothreonine; by PDPK1" evidence="1">
    <location>
        <position position="308"/>
    </location>
</feature>
<feature type="modified residue" description="Phosphothreonine" evidence="1">
    <location>
        <position position="448"/>
    </location>
</feature>
<feature type="modified residue" description="Phosphothreonine; by MTOR" evidence="2">
    <location>
        <position position="450"/>
    </location>
</feature>
<feature type="modified residue" description="Phosphoserine; by MTOR; alternate" evidence="1">
    <location>
        <position position="473"/>
    </location>
</feature>
<feature type="modified residue" description="Phosphotyrosine" evidence="1">
    <location>
        <position position="474"/>
    </location>
</feature>
<feature type="modified residue" description="Phosphoserine" evidence="2">
    <location>
        <position position="477"/>
    </location>
</feature>
<feature type="modified residue" description="Phosphothreonine" evidence="2">
    <location>
        <position position="479"/>
    </location>
</feature>
<feature type="glycosylation site" description="O-linked (GlcNAc) serine; alternate" evidence="1">
    <location>
        <position position="129"/>
    </location>
</feature>
<feature type="glycosylation site" description="O-linked (GlcNAc) threonine" evidence="1">
    <location>
        <position position="305"/>
    </location>
</feature>
<feature type="glycosylation site" description="O-linked (GlcNAc) threonine" evidence="1">
    <location>
        <position position="312"/>
    </location>
</feature>
<feature type="glycosylation site" description="O-linked (GlcNAc) serine; alternate" evidence="2">
    <location>
        <position position="473"/>
    </location>
</feature>
<feature type="disulfide bond" evidence="1">
    <location>
        <begin position="60"/>
        <end position="77"/>
    </location>
</feature>
<feature type="disulfide bond" evidence="3">
    <location>
        <begin position="296"/>
        <end position="310"/>
    </location>
</feature>
<feature type="cross-link" description="Glycyl lysine isopeptide (Lys-Gly) (interchain with G-Cter in ubiquitin)" evidence="1">
    <location>
        <position position="284"/>
    </location>
</feature>
<feature type="sequence conflict" description="In Ref. 1; CAA43371." evidence="11" ref="1">
    <original>D</original>
    <variation>E</variation>
    <location>
        <position position="149"/>
    </location>
</feature>
<feature type="sequence conflict" description="In Ref. 1; CAA43371." evidence="11" ref="1">
    <original>L</original>
    <variation>V</variation>
    <location>
        <position position="153"/>
    </location>
</feature>
<feature type="sequence conflict" description="In Ref. 1; CAA43371." evidence="11" ref="1">
    <original>GR</original>
    <variation>AA</variation>
    <location>
        <begin position="173"/>
        <end position="174"/>
    </location>
</feature>
<feature type="sequence conflict" description="In Ref. 1; CAA43371." evidence="11" ref="1">
    <original>F</original>
    <variation>S</variation>
    <location>
        <position position="209"/>
    </location>
</feature>
<dbReference type="EC" id="2.7.11.1"/>
<dbReference type="EMBL" id="X61036">
    <property type="protein sequence ID" value="CAA43371.1"/>
    <property type="molecule type" value="mRNA"/>
</dbReference>
<dbReference type="EMBL" id="AY781100">
    <property type="protein sequence ID" value="AAW71957.1"/>
    <property type="molecule type" value="mRNA"/>
</dbReference>
<dbReference type="PIR" id="S62117">
    <property type="entry name" value="S62117"/>
</dbReference>
<dbReference type="RefSeq" id="NP_776411.1">
    <property type="nucleotide sequence ID" value="NM_173986.2"/>
</dbReference>
<dbReference type="SMR" id="Q01314"/>
<dbReference type="BioGRID" id="158368">
    <property type="interactions" value="3"/>
</dbReference>
<dbReference type="CORUM" id="Q01314"/>
<dbReference type="ELM" id="Q01314"/>
<dbReference type="FunCoup" id="Q01314">
    <property type="interactions" value="1850"/>
</dbReference>
<dbReference type="IntAct" id="Q01314">
    <property type="interactions" value="1"/>
</dbReference>
<dbReference type="STRING" id="9913.ENSBTAP00000023461"/>
<dbReference type="ChEMBL" id="CHEMBL1250377"/>
<dbReference type="GlyCosmos" id="Q01314">
    <property type="glycosylation" value="4 sites, No reported glycans"/>
</dbReference>
<dbReference type="GlyGen" id="Q01314">
    <property type="glycosylation" value="4 sites"/>
</dbReference>
<dbReference type="iPTMnet" id="Q01314"/>
<dbReference type="PaxDb" id="9913-ENSBTAP00000023461"/>
<dbReference type="GeneID" id="280991"/>
<dbReference type="KEGG" id="bta:280991"/>
<dbReference type="CTD" id="207"/>
<dbReference type="eggNOG" id="KOG0690">
    <property type="taxonomic scope" value="Eukaryota"/>
</dbReference>
<dbReference type="InParanoid" id="Q01314"/>
<dbReference type="OrthoDB" id="63267at2759"/>
<dbReference type="BRENDA" id="2.7.11.1">
    <property type="organism ID" value="908"/>
</dbReference>
<dbReference type="Proteomes" id="UP000009136">
    <property type="component" value="Unplaced"/>
</dbReference>
<dbReference type="GO" id="GO:0005737">
    <property type="term" value="C:cytoplasm"/>
    <property type="evidence" value="ECO:0000250"/>
    <property type="project" value="UniProtKB"/>
</dbReference>
<dbReference type="GO" id="GO:0005758">
    <property type="term" value="C:mitochondrial intermembrane space"/>
    <property type="evidence" value="ECO:0000250"/>
    <property type="project" value="UniProtKB"/>
</dbReference>
<dbReference type="GO" id="GO:0005634">
    <property type="term" value="C:nucleus"/>
    <property type="evidence" value="ECO:0000250"/>
    <property type="project" value="UniProtKB"/>
</dbReference>
<dbReference type="GO" id="GO:0005886">
    <property type="term" value="C:plasma membrane"/>
    <property type="evidence" value="ECO:0000314"/>
    <property type="project" value="MGI"/>
</dbReference>
<dbReference type="GO" id="GO:0005524">
    <property type="term" value="F:ATP binding"/>
    <property type="evidence" value="ECO:0007669"/>
    <property type="project" value="UniProtKB-KW"/>
</dbReference>
<dbReference type="GO" id="GO:0005516">
    <property type="term" value="F:calmodulin binding"/>
    <property type="evidence" value="ECO:0000250"/>
    <property type="project" value="UniProtKB"/>
</dbReference>
<dbReference type="GO" id="GO:0099104">
    <property type="term" value="F:potassium channel activator activity"/>
    <property type="evidence" value="ECO:0000250"/>
    <property type="project" value="UniProtKB"/>
</dbReference>
<dbReference type="GO" id="GO:0004672">
    <property type="term" value="F:protein kinase activity"/>
    <property type="evidence" value="ECO:0000250"/>
    <property type="project" value="UniProtKB"/>
</dbReference>
<dbReference type="GO" id="GO:0106310">
    <property type="term" value="F:protein serine kinase activity"/>
    <property type="evidence" value="ECO:0007669"/>
    <property type="project" value="RHEA"/>
</dbReference>
<dbReference type="GO" id="GO:0004674">
    <property type="term" value="F:protein serine/threonine kinase activity"/>
    <property type="evidence" value="ECO:0000250"/>
    <property type="project" value="UniProtKB"/>
</dbReference>
<dbReference type="GO" id="GO:0006915">
    <property type="term" value="P:apoptotic process"/>
    <property type="evidence" value="ECO:0007669"/>
    <property type="project" value="UniProtKB-KW"/>
</dbReference>
<dbReference type="GO" id="GO:0071364">
    <property type="term" value="P:cellular response to epidermal growth factor stimulus"/>
    <property type="evidence" value="ECO:0000250"/>
    <property type="project" value="UniProtKB"/>
</dbReference>
<dbReference type="GO" id="GO:0071363">
    <property type="term" value="P:cellular response to growth factor stimulus"/>
    <property type="evidence" value="ECO:0000250"/>
    <property type="project" value="UniProtKB"/>
</dbReference>
<dbReference type="GO" id="GO:0032869">
    <property type="term" value="P:cellular response to insulin stimulus"/>
    <property type="evidence" value="ECO:0000250"/>
    <property type="project" value="UniProtKB"/>
</dbReference>
<dbReference type="GO" id="GO:0006006">
    <property type="term" value="P:glucose metabolic process"/>
    <property type="evidence" value="ECO:0007669"/>
    <property type="project" value="UniProtKB-KW"/>
</dbReference>
<dbReference type="GO" id="GO:0005978">
    <property type="term" value="P:glycogen biosynthetic process"/>
    <property type="evidence" value="ECO:0007669"/>
    <property type="project" value="UniProtKB-KW"/>
</dbReference>
<dbReference type="GO" id="GO:1902018">
    <property type="term" value="P:negative regulation of cilium assembly"/>
    <property type="evidence" value="ECO:0000250"/>
    <property type="project" value="UniProtKB"/>
</dbReference>
<dbReference type="GO" id="GO:0150033">
    <property type="term" value="P:negative regulation of protein localization to lysosome"/>
    <property type="evidence" value="ECO:0000250"/>
    <property type="project" value="UniProtKB"/>
</dbReference>
<dbReference type="GO" id="GO:0090201">
    <property type="term" value="P:negative regulation of release of cytochrome c from mitochondria"/>
    <property type="evidence" value="ECO:0000250"/>
    <property type="project" value="UniProtKB"/>
</dbReference>
<dbReference type="GO" id="GO:0007399">
    <property type="term" value="P:nervous system development"/>
    <property type="evidence" value="ECO:0007669"/>
    <property type="project" value="UniProtKB-KW"/>
</dbReference>
<dbReference type="GO" id="GO:0018105">
    <property type="term" value="P:peptidyl-serine phosphorylation"/>
    <property type="evidence" value="ECO:0000250"/>
    <property type="project" value="UniProtKB"/>
</dbReference>
<dbReference type="GO" id="GO:0016310">
    <property type="term" value="P:phosphorylation"/>
    <property type="evidence" value="ECO:0000250"/>
    <property type="project" value="UniProtKB"/>
</dbReference>
<dbReference type="GO" id="GO:0001938">
    <property type="term" value="P:positive regulation of endothelial cell proliferation"/>
    <property type="evidence" value="ECO:0000250"/>
    <property type="project" value="UniProtKB"/>
</dbReference>
<dbReference type="GO" id="GO:0046889">
    <property type="term" value="P:positive regulation of lipid biosynthetic process"/>
    <property type="evidence" value="ECO:0000250"/>
    <property type="project" value="UniProtKB"/>
</dbReference>
<dbReference type="GO" id="GO:1904263">
    <property type="term" value="P:positive regulation of TORC1 signaling"/>
    <property type="evidence" value="ECO:0000250"/>
    <property type="project" value="UniProtKB"/>
</dbReference>
<dbReference type="GO" id="GO:0006468">
    <property type="term" value="P:protein phosphorylation"/>
    <property type="evidence" value="ECO:0000250"/>
    <property type="project" value="UniProtKB"/>
</dbReference>
<dbReference type="GO" id="GO:0042981">
    <property type="term" value="P:regulation of apoptotic process"/>
    <property type="evidence" value="ECO:0000250"/>
    <property type="project" value="UniProtKB"/>
</dbReference>
<dbReference type="GO" id="GO:0030334">
    <property type="term" value="P:regulation of cell migration"/>
    <property type="evidence" value="ECO:0000250"/>
    <property type="project" value="UniProtKB"/>
</dbReference>
<dbReference type="GO" id="GO:0010975">
    <property type="term" value="P:regulation of neuron projection development"/>
    <property type="evidence" value="ECO:0000250"/>
    <property type="project" value="UniProtKB"/>
</dbReference>
<dbReference type="GO" id="GO:0006417">
    <property type="term" value="P:regulation of translation"/>
    <property type="evidence" value="ECO:0007669"/>
    <property type="project" value="UniProtKB-KW"/>
</dbReference>
<dbReference type="GO" id="GO:0070848">
    <property type="term" value="P:response to growth factor"/>
    <property type="evidence" value="ECO:0000250"/>
    <property type="project" value="UniProtKB"/>
</dbReference>
<dbReference type="GO" id="GO:0060416">
    <property type="term" value="P:response to growth hormone"/>
    <property type="evidence" value="ECO:0000314"/>
    <property type="project" value="AgBase"/>
</dbReference>
<dbReference type="GO" id="GO:1990418">
    <property type="term" value="P:response to insulin-like growth factor stimulus"/>
    <property type="evidence" value="ECO:0000314"/>
    <property type="project" value="AgBase"/>
</dbReference>
<dbReference type="GO" id="GO:0043434">
    <property type="term" value="P:response to peptide hormone"/>
    <property type="evidence" value="ECO:0000318"/>
    <property type="project" value="GO_Central"/>
</dbReference>
<dbReference type="CDD" id="cd01241">
    <property type="entry name" value="PH_PKB"/>
    <property type="match status" value="1"/>
</dbReference>
<dbReference type="CDD" id="cd05594">
    <property type="entry name" value="STKc_PKB_alpha"/>
    <property type="match status" value="1"/>
</dbReference>
<dbReference type="FunFam" id="1.10.510.10:FF:000033">
    <property type="entry name" value="Non-specific serine/threonine protein kinase"/>
    <property type="match status" value="1"/>
</dbReference>
<dbReference type="FunFam" id="2.30.29.30:FF:000027">
    <property type="entry name" value="Non-specific serine/threonine protein kinase"/>
    <property type="match status" value="1"/>
</dbReference>
<dbReference type="FunFam" id="3.30.200.20:FF:000838">
    <property type="entry name" value="Non-specific serine/threonine protein kinase"/>
    <property type="match status" value="1"/>
</dbReference>
<dbReference type="Gene3D" id="3.30.200.20">
    <property type="entry name" value="Phosphorylase Kinase, domain 1"/>
    <property type="match status" value="1"/>
</dbReference>
<dbReference type="Gene3D" id="2.30.29.30">
    <property type="entry name" value="Pleckstrin-homology domain (PH domain)/Phosphotyrosine-binding domain (PTB)"/>
    <property type="match status" value="1"/>
</dbReference>
<dbReference type="Gene3D" id="1.10.510.10">
    <property type="entry name" value="Transferase(Phosphotransferase) domain 1"/>
    <property type="match status" value="1"/>
</dbReference>
<dbReference type="InterPro" id="IPR000961">
    <property type="entry name" value="AGC-kinase_C"/>
</dbReference>
<dbReference type="InterPro" id="IPR034676">
    <property type="entry name" value="Akt1"/>
</dbReference>
<dbReference type="InterPro" id="IPR011009">
    <property type="entry name" value="Kinase-like_dom_sf"/>
</dbReference>
<dbReference type="InterPro" id="IPR011993">
    <property type="entry name" value="PH-like_dom_sf"/>
</dbReference>
<dbReference type="InterPro" id="IPR001849">
    <property type="entry name" value="PH_domain"/>
</dbReference>
<dbReference type="InterPro" id="IPR039026">
    <property type="entry name" value="PH_PKB"/>
</dbReference>
<dbReference type="InterPro" id="IPR017892">
    <property type="entry name" value="Pkinase_C"/>
</dbReference>
<dbReference type="InterPro" id="IPR000719">
    <property type="entry name" value="Prot_kinase_dom"/>
</dbReference>
<dbReference type="InterPro" id="IPR017441">
    <property type="entry name" value="Protein_kinase_ATP_BS"/>
</dbReference>
<dbReference type="InterPro" id="IPR008271">
    <property type="entry name" value="Ser/Thr_kinase_AS"/>
</dbReference>
<dbReference type="PANTHER" id="PTHR24351">
    <property type="entry name" value="RIBOSOMAL PROTEIN S6 KINASE"/>
    <property type="match status" value="1"/>
</dbReference>
<dbReference type="Pfam" id="PF00169">
    <property type="entry name" value="PH"/>
    <property type="match status" value="1"/>
</dbReference>
<dbReference type="Pfam" id="PF00069">
    <property type="entry name" value="Pkinase"/>
    <property type="match status" value="1"/>
</dbReference>
<dbReference type="Pfam" id="PF00433">
    <property type="entry name" value="Pkinase_C"/>
    <property type="match status" value="1"/>
</dbReference>
<dbReference type="SMART" id="SM00233">
    <property type="entry name" value="PH"/>
    <property type="match status" value="1"/>
</dbReference>
<dbReference type="SMART" id="SM00133">
    <property type="entry name" value="S_TK_X"/>
    <property type="match status" value="1"/>
</dbReference>
<dbReference type="SMART" id="SM00220">
    <property type="entry name" value="S_TKc"/>
    <property type="match status" value="1"/>
</dbReference>
<dbReference type="SUPFAM" id="SSF50729">
    <property type="entry name" value="PH domain-like"/>
    <property type="match status" value="1"/>
</dbReference>
<dbReference type="SUPFAM" id="SSF56112">
    <property type="entry name" value="Protein kinase-like (PK-like)"/>
    <property type="match status" value="1"/>
</dbReference>
<dbReference type="PROSITE" id="PS51285">
    <property type="entry name" value="AGC_KINASE_CTER"/>
    <property type="match status" value="1"/>
</dbReference>
<dbReference type="PROSITE" id="PS50003">
    <property type="entry name" value="PH_DOMAIN"/>
    <property type="match status" value="1"/>
</dbReference>
<dbReference type="PROSITE" id="PS00107">
    <property type="entry name" value="PROTEIN_KINASE_ATP"/>
    <property type="match status" value="1"/>
</dbReference>
<dbReference type="PROSITE" id="PS50011">
    <property type="entry name" value="PROTEIN_KINASE_DOM"/>
    <property type="match status" value="1"/>
</dbReference>
<dbReference type="PROSITE" id="PS00108">
    <property type="entry name" value="PROTEIN_KINASE_ST"/>
    <property type="match status" value="1"/>
</dbReference>
<proteinExistence type="evidence at protein level"/>